<accession>Q5UP38</accession>
<dbReference type="EMBL" id="AY653733">
    <property type="protein sequence ID" value="AAV50436.1"/>
    <property type="molecule type" value="Genomic_DNA"/>
</dbReference>
<dbReference type="SMR" id="Q5UP38"/>
<dbReference type="KEGG" id="vg:9924762"/>
<dbReference type="Proteomes" id="UP000001134">
    <property type="component" value="Genome"/>
</dbReference>
<dbReference type="InterPro" id="IPR008615">
    <property type="entry name" value="FNIP"/>
</dbReference>
<dbReference type="InterPro" id="IPR051251">
    <property type="entry name" value="STK_FNIP-Repeat"/>
</dbReference>
<dbReference type="PANTHER" id="PTHR32134">
    <property type="entry name" value="FNIP REPEAT-CONTAINING PROTEIN"/>
    <property type="match status" value="1"/>
</dbReference>
<dbReference type="PANTHER" id="PTHR32134:SF92">
    <property type="entry name" value="FNIP REPEAT-CONTAINING PROTEIN"/>
    <property type="match status" value="1"/>
</dbReference>
<dbReference type="Pfam" id="PF05725">
    <property type="entry name" value="FNIP"/>
    <property type="match status" value="2"/>
</dbReference>
<feature type="chain" id="PRO_0000071225" description="Putative FNIP repeat-containing protein L162">
    <location>
        <begin position="1"/>
        <end position="521"/>
    </location>
</feature>
<feature type="repeat" description="FNIP 1">
    <location>
        <begin position="179"/>
        <end position="221"/>
    </location>
</feature>
<feature type="repeat" description="FNIP 2">
    <location>
        <begin position="222"/>
        <end position="263"/>
    </location>
</feature>
<keyword id="KW-1185">Reference proteome</keyword>
<keyword id="KW-0677">Repeat</keyword>
<organism>
    <name type="scientific">Acanthamoeba polyphaga mimivirus</name>
    <name type="common">APMV</name>
    <dbReference type="NCBI Taxonomy" id="212035"/>
    <lineage>
        <taxon>Viruses</taxon>
        <taxon>Varidnaviria</taxon>
        <taxon>Bamfordvirae</taxon>
        <taxon>Nucleocytoviricota</taxon>
        <taxon>Megaviricetes</taxon>
        <taxon>Imitervirales</taxon>
        <taxon>Mimiviridae</taxon>
        <taxon>Megamimivirinae</taxon>
        <taxon>Mimivirus</taxon>
        <taxon>Mimivirus bradfordmassiliense</taxon>
    </lineage>
</organism>
<protein>
    <recommendedName>
        <fullName>Putative FNIP repeat-containing protein L162</fullName>
    </recommendedName>
</protein>
<proteinExistence type="predicted"/>
<name>YL162_MIMIV</name>
<sequence>MSNQLPIHDDLIVYMMQFLDDCSKRKFISTCRFLLELQSRIYYDDEVYVYNEVQHLSYSEFFKRLYYYAGIISSNINFIPQNIEYLQIYRDVSIEDLFEKNAEKLGSIKYLDIDEIDTGKINKLKNNPNSIKTLFVSNEQNILNLLIPSINKLYIHYHSNLDLNLSFSKLTRITFHIGFNKSTDFMFPESLEYLDLGDKFNTPLTPNSLPKNLKHLYLGYKYNYPIENCLPYGLKHLIFGHLFTQKIKNAIPETVTHLCMGGRFYRKVKGYLPKNLIHLEFGWGFNKPLLGEIPNVEYLKTGSSFEYPICDDSNPSKITHLIVGSKINKSDYVLPRNLKTLILDLDYDDPTILFKIPNSVTNLVIVNSTSIDLGSFDLNCYDHVTHLTLNTFVKGSLKYFHNVDTLILDQYFSTSLHNFLPNNLKHLYIENEIYKKQKQFIETNVIIHTFKSSWFSETEDKFLSKFWYGESKYDFIDKIIEYHKKYDNNKFIQKPLVESIIPIKQNSNHDCGLYCPFSKDY</sequence>
<gene>
    <name type="ordered locus">MIMI_L162</name>
</gene>
<reference key="1">
    <citation type="journal article" date="2004" name="Science">
        <title>The 1.2-megabase genome sequence of Mimivirus.</title>
        <authorList>
            <person name="Raoult D."/>
            <person name="Audic S."/>
            <person name="Robert C."/>
            <person name="Abergel C."/>
            <person name="Renesto P."/>
            <person name="Ogata H."/>
            <person name="La Scola B."/>
            <person name="Susan M."/>
            <person name="Claverie J.-M."/>
        </authorList>
    </citation>
    <scope>NUCLEOTIDE SEQUENCE [LARGE SCALE GENOMIC DNA]</scope>
    <source>
        <strain>Rowbotham-Bradford</strain>
    </source>
</reference>
<organismHost>
    <name type="scientific">Acanthamoeba polyphaga</name>
    <name type="common">Amoeba</name>
    <dbReference type="NCBI Taxonomy" id="5757"/>
</organismHost>